<name>ITPR2_BOVIN</name>
<accession>Q8WN96</accession>
<organism>
    <name type="scientific">Bos taurus</name>
    <name type="common">Bovine</name>
    <dbReference type="NCBI Taxonomy" id="9913"/>
    <lineage>
        <taxon>Eukaryota</taxon>
        <taxon>Metazoa</taxon>
        <taxon>Chordata</taxon>
        <taxon>Craniata</taxon>
        <taxon>Vertebrata</taxon>
        <taxon>Euteleostomi</taxon>
        <taxon>Mammalia</taxon>
        <taxon>Eutheria</taxon>
        <taxon>Laurasiatheria</taxon>
        <taxon>Artiodactyla</taxon>
        <taxon>Ruminantia</taxon>
        <taxon>Pecora</taxon>
        <taxon>Bovidae</taxon>
        <taxon>Bovinae</taxon>
        <taxon>Bos</taxon>
    </lineage>
</organism>
<proteinExistence type="evidence at protein level"/>
<comment type="function">
    <text evidence="4">Inositol 1,4,5-trisphosphate-gated calcium channel that upon inositol 1,4,5-trisphosphate binding transports calcium from the endoplasmic reticulum lumen to cytoplasm. Exists in two states; a long-lived closed state where the channel is essentially 'parked' with only very rare visits to an open state and that ligands facilitate the transition from the 'parked' state into a 'drive' mode represented by periods of bursting activity.</text>
</comment>
<comment type="catalytic activity">
    <reaction evidence="4">
        <text>Ca(2+)(in) = Ca(2+)(out)</text>
        <dbReference type="Rhea" id="RHEA:29671"/>
        <dbReference type="ChEBI" id="CHEBI:29108"/>
    </reaction>
</comment>
<comment type="activity regulation">
    <text evidence="1 4">Inositol 1,4,5-trisphosphate-gated calcium channel activity is increased by cAMP that occurs independently of PKA activation. ATP and cytosolic calcium modulate the open probability (Po) predominantly by facilitating extended 'bursting' activity of the channel (By similarity). Inositol 1,4,5-trisphosphate-gated calcium channel activity is inhibited by CALM1 in a calcium-dependent manner (By similarity).</text>
</comment>
<comment type="subunit">
    <text evidence="1 2 8">Homotetramer. Interacts with CABP1. Interacts with BOK; regulates ITPR2 expression. Interacts with BCL2L10 (By similarity). Interacts with TRPC4 (By similarity). Interacts with CHGA and CHGB (PubMed:11584008).</text>
</comment>
<comment type="subcellular location">
    <subcellularLocation>
        <location evidence="8">Endoplasmic reticulum membrane</location>
        <topology evidence="5">Multi-pass membrane protein</topology>
    </subcellularLocation>
    <subcellularLocation>
        <location evidence="8">Cytoplasmic vesicle</location>
        <location evidence="8">Secretory vesicle membrane</location>
        <topology evidence="5">Multi-pass membrane protein</topology>
    </subcellularLocation>
    <text evidence="4">Forms clusters on endoplasmic reticulum membrane upon inositol 1,4,5-trisphosphate binding.</text>
</comment>
<comment type="PTM">
    <text evidence="4">Phosphorylation by cAMP-dependent PKA on Ser-937 increases calcium release.</text>
</comment>
<comment type="PTM">
    <text evidence="1">Phosphorylation by CaMK2 on Ser-150 significantly decreases the channel open probability.</text>
</comment>
<comment type="similarity">
    <text evidence="9">Belongs to the InsP3 receptor family.</text>
</comment>
<feature type="chain" id="PRO_0000153923" description="Inositol 1,4,5-trisphosphate-gated calcium channel ITPR2">
    <location>
        <begin position="1"/>
        <end position="2701"/>
    </location>
</feature>
<feature type="topological domain" description="Cytoplasmic" evidence="5">
    <location>
        <begin position="1"/>
        <end position="2227"/>
    </location>
</feature>
<feature type="transmembrane region" description="Helical" evidence="5">
    <location>
        <begin position="2228"/>
        <end position="2248"/>
    </location>
</feature>
<feature type="topological domain" description="Extracellular" evidence="5">
    <location>
        <begin position="2249"/>
        <end position="2260"/>
    </location>
</feature>
<feature type="transmembrane region" description="Helical" evidence="5">
    <location>
        <begin position="2261"/>
        <end position="2281"/>
    </location>
</feature>
<feature type="topological domain" description="Cytoplasmic" evidence="5">
    <location>
        <begin position="2282"/>
        <end position="2307"/>
    </location>
</feature>
<feature type="transmembrane region" description="Helical" evidence="5">
    <location>
        <begin position="2308"/>
        <end position="2328"/>
    </location>
</feature>
<feature type="topological domain" description="Extracellular" evidence="5">
    <location>
        <begin position="2329"/>
        <end position="2351"/>
    </location>
</feature>
<feature type="transmembrane region" description="Helical" evidence="5">
    <location>
        <begin position="2352"/>
        <end position="2372"/>
    </location>
</feature>
<feature type="topological domain" description="Cytoplasmic" evidence="5">
    <location>
        <begin position="2373"/>
        <end position="2394"/>
    </location>
</feature>
<feature type="transmembrane region" description="Helical" evidence="5">
    <location>
        <begin position="2395"/>
        <end position="2415"/>
    </location>
</feature>
<feature type="topological domain" description="Extracellular" evidence="5">
    <location>
        <begin position="2416"/>
        <end position="2520"/>
    </location>
</feature>
<feature type="transmembrane region" description="Helical" evidence="5">
    <location>
        <begin position="2521"/>
        <end position="2541"/>
    </location>
</feature>
<feature type="topological domain" description="Cytoplasmic" evidence="5">
    <location>
        <begin position="2542"/>
        <end position="2701"/>
    </location>
</feature>
<feature type="domain" description="MIR 1" evidence="6">
    <location>
        <begin position="112"/>
        <end position="166"/>
    </location>
</feature>
<feature type="domain" description="MIR 2" evidence="6">
    <location>
        <begin position="173"/>
        <end position="223"/>
    </location>
</feature>
<feature type="domain" description="MIR 3" evidence="6">
    <location>
        <begin position="231"/>
        <end position="287"/>
    </location>
</feature>
<feature type="domain" description="MIR 4" evidence="6">
    <location>
        <begin position="294"/>
        <end position="372"/>
    </location>
</feature>
<feature type="domain" description="MIR 5" evidence="6">
    <location>
        <begin position="378"/>
        <end position="434"/>
    </location>
</feature>
<feature type="region of interest" description="Disordered" evidence="7">
    <location>
        <begin position="324"/>
        <end position="344"/>
    </location>
</feature>
<feature type="region of interest" description="Disordered" evidence="7">
    <location>
        <begin position="1139"/>
        <end position="1174"/>
    </location>
</feature>
<feature type="region of interest" description="Disordered" evidence="7">
    <location>
        <begin position="2678"/>
        <end position="2701"/>
    </location>
</feature>
<feature type="compositionally biased region" description="Basic and acidic residues" evidence="7">
    <location>
        <begin position="324"/>
        <end position="336"/>
    </location>
</feature>
<feature type="binding site" evidence="3">
    <location>
        <position position="265"/>
    </location>
    <ligand>
        <name>1D-myo-inositol 1,4,5-trisphosphate</name>
        <dbReference type="ChEBI" id="CHEBI:203600"/>
    </ligand>
</feature>
<feature type="binding site" evidence="3">
    <location>
        <position position="267"/>
    </location>
    <ligand>
        <name>1D-myo-inositol 1,4,5-trisphosphate</name>
        <dbReference type="ChEBI" id="CHEBI:203600"/>
    </ligand>
</feature>
<feature type="binding site" evidence="3">
    <location>
        <position position="268"/>
    </location>
    <ligand>
        <name>1D-myo-inositol 1,4,5-trisphosphate</name>
        <dbReference type="ChEBI" id="CHEBI:203600"/>
    </ligand>
</feature>
<feature type="binding site" evidence="3">
    <location>
        <position position="269"/>
    </location>
    <ligand>
        <name>1D-myo-inositol 1,4,5-trisphosphate</name>
        <dbReference type="ChEBI" id="CHEBI:203600"/>
    </ligand>
</feature>
<feature type="binding site" evidence="3">
    <location>
        <position position="503"/>
    </location>
    <ligand>
        <name>1D-myo-inositol 1,4,5-trisphosphate</name>
        <dbReference type="ChEBI" id="CHEBI:203600"/>
    </ligand>
</feature>
<feature type="binding site" evidence="3">
    <location>
        <position position="507"/>
    </location>
    <ligand>
        <name>1D-myo-inositol 1,4,5-trisphosphate</name>
        <dbReference type="ChEBI" id="CHEBI:203600"/>
    </ligand>
</feature>
<feature type="binding site" evidence="3">
    <location>
        <position position="510"/>
    </location>
    <ligand>
        <name>1D-myo-inositol 1,4,5-trisphosphate</name>
        <dbReference type="ChEBI" id="CHEBI:203600"/>
    </ligand>
</feature>
<feature type="binding site" evidence="3">
    <location>
        <position position="567"/>
    </location>
    <ligand>
        <name>1D-myo-inositol 1,4,5-trisphosphate</name>
        <dbReference type="ChEBI" id="CHEBI:203600"/>
    </ligand>
</feature>
<feature type="binding site" evidence="3">
    <location>
        <position position="568"/>
    </location>
    <ligand>
        <name>1D-myo-inositol 1,4,5-trisphosphate</name>
        <dbReference type="ChEBI" id="CHEBI:203600"/>
    </ligand>
</feature>
<feature type="binding site" evidence="3">
    <location>
        <position position="569"/>
    </location>
    <ligand>
        <name>1D-myo-inositol 1,4,5-trisphosphate</name>
        <dbReference type="ChEBI" id="CHEBI:203600"/>
    </ligand>
</feature>
<feature type="binding site" evidence="3">
    <location>
        <position position="744"/>
    </location>
    <ligand>
        <name>Ca(2+)</name>
        <dbReference type="ChEBI" id="CHEBI:29108"/>
        <label>1</label>
        <note>low affinity</note>
    </ligand>
</feature>
<feature type="binding site" evidence="3">
    <location>
        <position position="1124"/>
    </location>
    <ligand>
        <name>Ca(2+)</name>
        <dbReference type="ChEBI" id="CHEBI:29108"/>
        <label>1</label>
        <note>low affinity</note>
    </ligand>
</feature>
<feature type="binding site" evidence="3">
    <location>
        <position position="1127"/>
    </location>
    <ligand>
        <name>Ca(2+)</name>
        <dbReference type="ChEBI" id="CHEBI:29108"/>
        <label>1</label>
        <note>low affinity</note>
    </ligand>
</feature>
<feature type="binding site" evidence="3">
    <location>
        <position position="1930"/>
    </location>
    <ligand>
        <name>Ca(2+)</name>
        <dbReference type="ChEBI" id="CHEBI:29108"/>
        <label>2</label>
        <note>high affinity</note>
    </ligand>
</feature>
<feature type="binding site" evidence="3">
    <location>
        <position position="1994"/>
    </location>
    <ligand>
        <name>Ca(2+)</name>
        <dbReference type="ChEBI" id="CHEBI:29108"/>
        <label>2</label>
        <note>high affinity</note>
    </ligand>
</feature>
<feature type="binding site" evidence="3">
    <location>
        <position position="2044"/>
    </location>
    <ligand>
        <name>ATP</name>
        <dbReference type="ChEBI" id="CHEBI:30616"/>
    </ligand>
</feature>
<feature type="binding site" evidence="3">
    <location>
        <position position="2177"/>
    </location>
    <ligand>
        <name>ATP</name>
        <dbReference type="ChEBI" id="CHEBI:30616"/>
    </ligand>
</feature>
<feature type="binding site" evidence="3">
    <location>
        <position position="2562"/>
    </location>
    <ligand>
        <name>ATP</name>
        <dbReference type="ChEBI" id="CHEBI:30616"/>
    </ligand>
</feature>
<feature type="binding site" evidence="3">
    <location>
        <position position="2562"/>
    </location>
    <ligand>
        <name>Zn(2+)</name>
        <dbReference type="ChEBI" id="CHEBI:29105"/>
    </ligand>
</feature>
<feature type="binding site" evidence="3">
    <location>
        <position position="2563"/>
    </location>
    <ligand>
        <name>ATP</name>
        <dbReference type="ChEBI" id="CHEBI:30616"/>
    </ligand>
</feature>
<feature type="binding site" evidence="3">
    <location>
        <position position="2565"/>
    </location>
    <ligand>
        <name>Zn(2+)</name>
        <dbReference type="ChEBI" id="CHEBI:29105"/>
    </ligand>
</feature>
<feature type="binding site" evidence="3">
    <location>
        <position position="2582"/>
    </location>
    <ligand>
        <name>Zn(2+)</name>
        <dbReference type="ChEBI" id="CHEBI:29105"/>
    </ligand>
</feature>
<feature type="binding site" evidence="3">
    <location>
        <position position="2584"/>
    </location>
    <ligand>
        <name>ATP</name>
        <dbReference type="ChEBI" id="CHEBI:30616"/>
    </ligand>
</feature>
<feature type="binding site" evidence="3">
    <location>
        <position position="2587"/>
    </location>
    <ligand>
        <name>ATP</name>
        <dbReference type="ChEBI" id="CHEBI:30616"/>
    </ligand>
</feature>
<feature type="binding site" evidence="3">
    <location>
        <position position="2587"/>
    </location>
    <ligand>
        <name>Zn(2+)</name>
        <dbReference type="ChEBI" id="CHEBI:29105"/>
    </ligand>
</feature>
<feature type="binding site" evidence="3">
    <location>
        <position position="2588"/>
    </location>
    <ligand>
        <name>ATP</name>
        <dbReference type="ChEBI" id="CHEBI:30616"/>
    </ligand>
</feature>
<feature type="binding site" evidence="3">
    <location>
        <position position="2589"/>
    </location>
    <ligand>
        <name>ATP</name>
        <dbReference type="ChEBI" id="CHEBI:30616"/>
    </ligand>
</feature>
<feature type="binding site" evidence="3">
    <location>
        <position position="2605"/>
    </location>
    <ligand>
        <name>Ca(2+)</name>
        <dbReference type="ChEBI" id="CHEBI:29108"/>
        <label>2</label>
        <note>high affinity</note>
    </ligand>
</feature>
<feature type="modified residue" description="Phosphoserine; by PKA" evidence="4">
    <location>
        <position position="937"/>
    </location>
</feature>
<feature type="modified residue" description="Phosphoserine" evidence="2">
    <location>
        <position position="1160"/>
    </location>
</feature>
<feature type="modified residue" description="Phosphoserine" evidence="4">
    <location>
        <position position="1711"/>
    </location>
</feature>
<feature type="modified residue" description="Phosphotyrosine" evidence="5">
    <location>
        <position position="2607"/>
    </location>
</feature>
<feature type="modified residue" description="Phosphoserine" evidence="4">
    <location>
        <position position="2633"/>
    </location>
</feature>
<feature type="modified residue" description="Phosphoserine" evidence="4">
    <location>
        <position position="2636"/>
    </location>
</feature>
<dbReference type="EMBL" id="AF402600">
    <property type="protein sequence ID" value="AAL39077.1"/>
    <property type="molecule type" value="mRNA"/>
</dbReference>
<dbReference type="RefSeq" id="NP_776794.1">
    <property type="nucleotide sequence ID" value="NM_174369.2"/>
</dbReference>
<dbReference type="SMR" id="Q8WN96"/>
<dbReference type="FunCoup" id="Q8WN96">
    <property type="interactions" value="1029"/>
</dbReference>
<dbReference type="STRING" id="9913.ENSBTAP00000066830"/>
<dbReference type="PaxDb" id="9913-ENSBTAP00000002982"/>
<dbReference type="GeneID" id="281878"/>
<dbReference type="KEGG" id="bta:281878"/>
<dbReference type="CTD" id="3709"/>
<dbReference type="eggNOG" id="KOG3533">
    <property type="taxonomic scope" value="Eukaryota"/>
</dbReference>
<dbReference type="InParanoid" id="Q8WN96"/>
<dbReference type="OrthoDB" id="300855at2759"/>
<dbReference type="Proteomes" id="UP000009136">
    <property type="component" value="Unplaced"/>
</dbReference>
<dbReference type="GO" id="GO:0005789">
    <property type="term" value="C:endoplasmic reticulum membrane"/>
    <property type="evidence" value="ECO:0000318"/>
    <property type="project" value="GO_Central"/>
</dbReference>
<dbReference type="GO" id="GO:0005886">
    <property type="term" value="C:plasma membrane"/>
    <property type="evidence" value="ECO:0000318"/>
    <property type="project" value="GO_Central"/>
</dbReference>
<dbReference type="GO" id="GO:0005791">
    <property type="term" value="C:rough endoplasmic reticulum"/>
    <property type="evidence" value="ECO:0000314"/>
    <property type="project" value="CACAO"/>
</dbReference>
<dbReference type="GO" id="GO:0016529">
    <property type="term" value="C:sarcoplasmic reticulum"/>
    <property type="evidence" value="ECO:0000318"/>
    <property type="project" value="GO_Central"/>
</dbReference>
<dbReference type="GO" id="GO:0030667">
    <property type="term" value="C:secretory granule membrane"/>
    <property type="evidence" value="ECO:0000314"/>
    <property type="project" value="CACAO"/>
</dbReference>
<dbReference type="GO" id="GO:0030658">
    <property type="term" value="C:transport vesicle membrane"/>
    <property type="evidence" value="ECO:0007669"/>
    <property type="project" value="UniProtKB-SubCell"/>
</dbReference>
<dbReference type="GO" id="GO:0005524">
    <property type="term" value="F:ATP binding"/>
    <property type="evidence" value="ECO:0007669"/>
    <property type="project" value="UniProtKB-KW"/>
</dbReference>
<dbReference type="GO" id="GO:0005509">
    <property type="term" value="F:calcium ion binding"/>
    <property type="evidence" value="ECO:0000318"/>
    <property type="project" value="GO_Central"/>
</dbReference>
<dbReference type="GO" id="GO:0070679">
    <property type="term" value="F:inositol 1,4,5 trisphosphate binding"/>
    <property type="evidence" value="ECO:0000318"/>
    <property type="project" value="GO_Central"/>
</dbReference>
<dbReference type="GO" id="GO:0005220">
    <property type="term" value="F:inositol 1,4,5-trisphosphate-gated calcium channel activity"/>
    <property type="evidence" value="ECO:0000250"/>
    <property type="project" value="UniProtKB"/>
</dbReference>
<dbReference type="GO" id="GO:0035091">
    <property type="term" value="F:phosphatidylinositol binding"/>
    <property type="evidence" value="ECO:0000318"/>
    <property type="project" value="GO_Central"/>
</dbReference>
<dbReference type="GO" id="GO:0051209">
    <property type="term" value="P:release of sequestered calcium ion into cytosol"/>
    <property type="evidence" value="ECO:0000250"/>
    <property type="project" value="UniProtKB"/>
</dbReference>
<dbReference type="CDD" id="cd23288">
    <property type="entry name" value="beta-trefoil_MIR_ITPR2"/>
    <property type="match status" value="1"/>
</dbReference>
<dbReference type="FunFam" id="2.80.10.50:FF:000002">
    <property type="entry name" value="Inositol 1,4,5-trisphosphate receptor type 2"/>
    <property type="match status" value="1"/>
</dbReference>
<dbReference type="FunFam" id="2.80.10.50:FF:000005">
    <property type="entry name" value="Inositol 1,4,5-trisphosphate receptor type 2"/>
    <property type="match status" value="1"/>
</dbReference>
<dbReference type="FunFam" id="1.10.287.70:FF:000079">
    <property type="entry name" value="Inositol 1,4,5-trisphosphate receptor type 3"/>
    <property type="match status" value="1"/>
</dbReference>
<dbReference type="FunFam" id="1.25.10.30:FF:000001">
    <property type="entry name" value="Inositol 1,4,5-trisphosphate receptor, type 2"/>
    <property type="match status" value="1"/>
</dbReference>
<dbReference type="Gene3D" id="1.10.287.70">
    <property type="match status" value="1"/>
</dbReference>
<dbReference type="Gene3D" id="2.80.10.50">
    <property type="match status" value="2"/>
</dbReference>
<dbReference type="Gene3D" id="1.25.10.30">
    <property type="entry name" value="IP3 receptor type 1 binding core, RIH domain"/>
    <property type="match status" value="1"/>
</dbReference>
<dbReference type="InterPro" id="IPR016024">
    <property type="entry name" value="ARM-type_fold"/>
</dbReference>
<dbReference type="InterPro" id="IPR014821">
    <property type="entry name" value="Ins145_P3_rcpt"/>
</dbReference>
<dbReference type="InterPro" id="IPR000493">
    <property type="entry name" value="InsP3_rcpt"/>
</dbReference>
<dbReference type="InterPro" id="IPR005821">
    <property type="entry name" value="Ion_trans_dom"/>
</dbReference>
<dbReference type="InterPro" id="IPR036300">
    <property type="entry name" value="MIR_dom_sf"/>
</dbReference>
<dbReference type="InterPro" id="IPR016093">
    <property type="entry name" value="MIR_motif"/>
</dbReference>
<dbReference type="InterPro" id="IPR013662">
    <property type="entry name" value="RIH_assoc-dom"/>
</dbReference>
<dbReference type="InterPro" id="IPR000699">
    <property type="entry name" value="RIH_dom"/>
</dbReference>
<dbReference type="InterPro" id="IPR015925">
    <property type="entry name" value="Ryanodine_IP3_receptor"/>
</dbReference>
<dbReference type="InterPro" id="IPR035910">
    <property type="entry name" value="RyR/IP3R_RIH_dom_sf"/>
</dbReference>
<dbReference type="PANTHER" id="PTHR45816:SF3">
    <property type="entry name" value="INOSITOL 1,4,5-TRISPHOSPHATE RECEPTOR"/>
    <property type="match status" value="1"/>
</dbReference>
<dbReference type="PANTHER" id="PTHR45816">
    <property type="entry name" value="MIR DOMAIN-CONTAINING PROTEIN"/>
    <property type="match status" value="1"/>
</dbReference>
<dbReference type="Pfam" id="PF08709">
    <property type="entry name" value="Ins145_P3_rec"/>
    <property type="match status" value="1"/>
</dbReference>
<dbReference type="Pfam" id="PF00520">
    <property type="entry name" value="Ion_trans"/>
    <property type="match status" value="1"/>
</dbReference>
<dbReference type="Pfam" id="PF02815">
    <property type="entry name" value="MIR"/>
    <property type="match status" value="1"/>
</dbReference>
<dbReference type="Pfam" id="PF08454">
    <property type="entry name" value="RIH_assoc"/>
    <property type="match status" value="1"/>
</dbReference>
<dbReference type="Pfam" id="PF01365">
    <property type="entry name" value="RYDR_ITPR"/>
    <property type="match status" value="2"/>
</dbReference>
<dbReference type="PRINTS" id="PR00779">
    <property type="entry name" value="INSP3RECEPTR"/>
</dbReference>
<dbReference type="SMART" id="SM00472">
    <property type="entry name" value="MIR"/>
    <property type="match status" value="4"/>
</dbReference>
<dbReference type="SUPFAM" id="SSF48371">
    <property type="entry name" value="ARM repeat"/>
    <property type="match status" value="1"/>
</dbReference>
<dbReference type="SUPFAM" id="SSF100909">
    <property type="entry name" value="IP3 receptor type 1 binding core, domain 2"/>
    <property type="match status" value="2"/>
</dbReference>
<dbReference type="SUPFAM" id="SSF82109">
    <property type="entry name" value="MIR domain"/>
    <property type="match status" value="2"/>
</dbReference>
<dbReference type="PROSITE" id="PS50919">
    <property type="entry name" value="MIR"/>
    <property type="match status" value="5"/>
</dbReference>
<keyword id="KW-0067">ATP-binding</keyword>
<keyword id="KW-0106">Calcium</keyword>
<keyword id="KW-0107">Calcium channel</keyword>
<keyword id="KW-0109">Calcium transport</keyword>
<keyword id="KW-0968">Cytoplasmic vesicle</keyword>
<keyword id="KW-0256">Endoplasmic reticulum</keyword>
<keyword id="KW-0407">Ion channel</keyword>
<keyword id="KW-0406">Ion transport</keyword>
<keyword id="KW-1071">Ligand-gated ion channel</keyword>
<keyword id="KW-0472">Membrane</keyword>
<keyword id="KW-0479">Metal-binding</keyword>
<keyword id="KW-0547">Nucleotide-binding</keyword>
<keyword id="KW-0597">Phosphoprotein</keyword>
<keyword id="KW-0675">Receptor</keyword>
<keyword id="KW-1185">Reference proteome</keyword>
<keyword id="KW-0677">Repeat</keyword>
<keyword id="KW-0812">Transmembrane</keyword>
<keyword id="KW-1133">Transmembrane helix</keyword>
<keyword id="KW-0813">Transport</keyword>
<keyword id="KW-0862">Zinc</keyword>
<gene>
    <name evidence="2" type="primary">ITPR2</name>
</gene>
<evidence type="ECO:0000250" key="1">
    <source>
        <dbReference type="UniProtKB" id="P29995"/>
    </source>
</evidence>
<evidence type="ECO:0000250" key="2">
    <source>
        <dbReference type="UniProtKB" id="Q14571"/>
    </source>
</evidence>
<evidence type="ECO:0000250" key="3">
    <source>
        <dbReference type="UniProtKB" id="Q14573"/>
    </source>
</evidence>
<evidence type="ECO:0000250" key="4">
    <source>
        <dbReference type="UniProtKB" id="Q9Z329"/>
    </source>
</evidence>
<evidence type="ECO:0000255" key="5"/>
<evidence type="ECO:0000255" key="6">
    <source>
        <dbReference type="PROSITE-ProRule" id="PRU00131"/>
    </source>
</evidence>
<evidence type="ECO:0000256" key="7">
    <source>
        <dbReference type="SAM" id="MobiDB-lite"/>
    </source>
</evidence>
<evidence type="ECO:0000269" key="8">
    <source>
    </source>
</evidence>
<evidence type="ECO:0000305" key="9"/>
<protein>
    <recommendedName>
        <fullName evidence="2">Inositol 1,4,5-trisphosphate-gated calcium channel ITPR2</fullName>
    </recommendedName>
    <alternativeName>
        <fullName>IP3 receptor isoform 2</fullName>
        <shortName>IP3R 2</shortName>
        <shortName>InsP3R2</shortName>
    </alternativeName>
    <alternativeName>
        <fullName>Inositol 1,4,5-trisphosphate receptor type 2</fullName>
    </alternativeName>
    <alternativeName>
        <fullName>Type 2 inositol 1,4,5-trisphosphate receptor</fullName>
        <shortName>Type 2 InsP3 receptor</shortName>
    </alternativeName>
</protein>
<sequence length="2701" mass="307820">MSDKMSSFLYIGDIVSLYAEGSVNGFINTLGLVDDRCVVHPEAGDLANPPKKFRDCLFKVCPMNRYSAQKQYWKAKQAKQGNHTEAALLKKLQHAAELEQKQNESENKKLLGEIVKYSNVIQLLHIKSNKYLTVNKRLPALLEKNAMRVSLDAAGNEGSWFYIHPFWKLRSEGDNIVVGGKVVLMPVNAGQPLHASNIELLDNPGCKEVNAVNCNTSWKITLFMKYSSYREDVLKGGDVVRLFHAEQEKFLTCDEYEKKQHIFLRTTLRQSATSATSSKALWEIEVVHHDPCRGGAGQWNSLFRFKHLATGNYLAAELNPDYRDAQNEGKNVRDGDLPASKKKRQAGEKIMYTLVSVPHGNDIASLFELDATTLQRADCLVPRNSYVRLRHLCTNTWVTSTSIPIDTDEERPVMLKIGTCQTKEDKEAFAIVSVPPSEVRDLDFANDANKVLATTVKKLENGTITQNERRFVTKLLEDLIFFVADVPNNGQDVLDVLITKPNRERQKLMREQNILAQVFGILKAPFKEKAGEGSMLRLEDLGDQRYAPYKYMLRLCYRVLGHSQQDYRKNQEYIAKNFCVMQSQIGYDILAEDTITALLHNNRKLLEKHITAKEIETFVSLLRRNREPRFLDYLSDLCVSNTTAIPVTQELICKFMLSPGNADILIQTKLVSMQGDNPMESAILSDDIDEEEVWLYWIDSNKEPHGKAIRHLAQEAKEGTKADLEVLTYYRYQLNLFARMCLDRQYLAINQISTQLSVDLILRCMSDESLPFDLRASFCRLMLHMHVDRDPQESVVPVRYARLWTEIPTKITIHEYDSITDSSRNDMKRKFALTMEFVEEYLKEVVNQPFPFGDKEKNKLTFEVVHLARNLIYFGFYSFSELLRLTRTLLAILDIVQAPMSSYFERLSKFQDGGNNVMRTIHGVGEMMTQMVLSRGSIFPMSVPDIQPSLHPSKQGSPTDHEDVTVMDTKLKIIEILQFILSVRLDYGISYMLSIYKKEFGENNGNAEMSTNGSPDTLLPSAIVPDIDEIAAQAETMFAGRKEKNPVQLDDEGGRTFLRVLIHLIMHDYPPLLSGALQLLFKHFSQRAEVLQAFKQVQLLVSNQDVDNYKQIKADLDQLRLTVEKSELWVEKSSSYENGEMGENQVKGGEEPIEDSNILSPVQDGTKKPQIDSNKSNNYRIVKEILIRLSKLCVQNKKCRNQHQRLLKNMGAHSVVLDLLQIPYEKNDEKMNEVMNLAHTFLQNFCRGNPQNQVLLHKHLNLFLTPGLLEAETMRHIFMNNYHLCNEISERVVQHFVHCIETHGRHVEYLRFLQTIVKADGKYVKKCQDMVMTELINGGEDVLIFYNDRASFPILLHMMCSERDRGDESGPLAYHITLVELLAACTEGKNVYTEIKCNSLLPLDDIVRVVTHDDCIPEVKIAYVNFVNHCYVDTEVEMKEIYTSNHIWKLFENFLVDMARVCNTTTDRKHADTFLEKCVTESIMNIVSGFFNSPFSDNSTSLQTHQPVFIQLLQSAFRIYNCTWPNPAQKASVESCIRTLAEVAKNRGIAIPVDLDSQVNTLFLKSHSNMVQRAAMGWRLSARSGPRFKEALGGPSWDYRNIIEKLQDVVASLEQQFSPMMQAEFSVLVDVLYSPELLFPEGSDARIRCGAFMSKLINHTKKLMEKEEKLCIKILQTLREMLEKKDSFVEEGNTLRKILLNRYFKGDYGVSINGHLSGTYCKTAQVGGSFSGQDSDKMGISMSDIQCLLDKEGASELVIDVIVNTKNDRIFSEGILLGIALLEGGNTQTQYSFYQQLHEQKKSEKFFKVLYDRMKAAQKEIRSTVTVNTIDLGNKKRDDDTELMTSGPRMRVRDSSLHLKEGMKGQLTEASSATSKAYCVYRREMDPEIDIMCAGPEAGNAEDRSTEEVTMSPAIAIMQPISRFLQLLCENHNRELQHFLRNQNNKTNYNLVCETLQFLDCICGSTTGGLGLLGLYINEKNVVLVNQTLESLTEYCQGPCHENQTCIATHESNGIDIIIALILNDINPLGKYRMDLVLQLKNNAPKLLLAIMESRHDSENAERILFNMRPRELVDVMKNAYNQGLECDHGDDEGGDDDVSPKDVGHNIYILAHQLARHNKLLQQMLKPGSDPDDGDEALKYYANHTAQIEIVRHDRTMEQIVFPVPNICEYLTRESKCRVFNTTERDEQGSKVNDFFQQTEDLYNEMKWQKKIRSNPALFWFSRHISLWGSISFNLAVFINLAVALFYPFGDDGDEGTLSPMFSILLWIAVAICTSMLFFFSKPVGIRPFLVSVMLRSIYTIGLGPTLILLGAANLCNKIVFLVSFVGNRGTFTRGYRAVILDMAFLYHVAYVLVCMLGLFVHEFFYSFLLFDLVYREETLLNVIKSVTRNGRSIILTAVLALILVYLFSIIGFLFLKDDFTMEVDRLKNRTPITGSNAVPTMTLTSILSTCEKDNCSPTIPASNTADEEYEDGIERTCDTLLMCIVTVLNQGLRNGGGVGDVLRRPSKDEPLFAARVVYDLLFYFIVIIIVLNLIFGVIIDTFADLRSEKQKKEEILKTTCFICGLERDKFDNKTVSFEEHIKSEHNMWHYLYFLVLVKVKDPTEYTGPESYVAQMIVEKNLDWFPRMRAMSLVSSEGDSEQNEVRNLQEKLESTMSLVKQLSSQLAELKEQMTEQRKNKQRLGFLGSNTPHVNHHMPPH</sequence>
<reference key="1">
    <citation type="journal article" date="2001" name="J. Biol. Chem.">
        <title>Localization of three types of the inositol 1,4,5-trisphosphate receptor/Ca2+ channel in the secretory granules and coupling with the Ca2+ storage proteins chromogranins A and B.</title>
        <authorList>
            <person name="Yoo S.H."/>
            <person name="Oh Y.S."/>
            <person name="Kang M.K."/>
            <person name="Huh Y.H."/>
            <person name="So S.H."/>
            <person name="Park H.S."/>
            <person name="Park H.Y."/>
        </authorList>
    </citation>
    <scope>NUCLEOTIDE SEQUENCE [MRNA]</scope>
    <scope>SUBCELLULAR LOCATION</scope>
    <scope>INTERACTION WITH CHGA AND CHGB</scope>
    <source>
        <tissue>Adrenal medulla</tissue>
    </source>
</reference>